<dbReference type="EMBL" id="CP000511">
    <property type="protein sequence ID" value="ABM14312.1"/>
    <property type="molecule type" value="Genomic_DNA"/>
</dbReference>
<dbReference type="RefSeq" id="WP_011780716.1">
    <property type="nucleotide sequence ID" value="NZ_JACKSD010000023.1"/>
</dbReference>
<dbReference type="SMR" id="A1TAW2"/>
<dbReference type="STRING" id="350058.Mvan_3517"/>
<dbReference type="KEGG" id="mva:Mvan_3517"/>
<dbReference type="eggNOG" id="COG1799">
    <property type="taxonomic scope" value="Bacteria"/>
</dbReference>
<dbReference type="HOGENOM" id="CLU_078499_0_0_11"/>
<dbReference type="Proteomes" id="UP000009159">
    <property type="component" value="Chromosome"/>
</dbReference>
<dbReference type="GO" id="GO:0005737">
    <property type="term" value="C:cytoplasm"/>
    <property type="evidence" value="ECO:0007669"/>
    <property type="project" value="UniProtKB-SubCell"/>
</dbReference>
<dbReference type="GO" id="GO:0000917">
    <property type="term" value="P:division septum assembly"/>
    <property type="evidence" value="ECO:0007669"/>
    <property type="project" value="UniProtKB-KW"/>
</dbReference>
<dbReference type="GO" id="GO:0043093">
    <property type="term" value="P:FtsZ-dependent cytokinesis"/>
    <property type="evidence" value="ECO:0007669"/>
    <property type="project" value="UniProtKB-UniRule"/>
</dbReference>
<dbReference type="FunFam" id="3.30.110.150:FF:000001">
    <property type="entry name" value="Cell division protein SepF"/>
    <property type="match status" value="1"/>
</dbReference>
<dbReference type="Gene3D" id="3.30.110.150">
    <property type="entry name" value="SepF-like protein"/>
    <property type="match status" value="1"/>
</dbReference>
<dbReference type="HAMAP" id="MF_01197">
    <property type="entry name" value="SepF"/>
    <property type="match status" value="1"/>
</dbReference>
<dbReference type="InterPro" id="IPR023052">
    <property type="entry name" value="Cell_div_SepF"/>
</dbReference>
<dbReference type="InterPro" id="IPR007561">
    <property type="entry name" value="Cell_div_SepF/SepF-rel"/>
</dbReference>
<dbReference type="InterPro" id="IPR038594">
    <property type="entry name" value="SepF-like_sf"/>
</dbReference>
<dbReference type="PANTHER" id="PTHR35798">
    <property type="entry name" value="CELL DIVISION PROTEIN SEPF"/>
    <property type="match status" value="1"/>
</dbReference>
<dbReference type="PANTHER" id="PTHR35798:SF1">
    <property type="entry name" value="CELL DIVISION PROTEIN SEPF"/>
    <property type="match status" value="1"/>
</dbReference>
<dbReference type="Pfam" id="PF04472">
    <property type="entry name" value="SepF"/>
    <property type="match status" value="1"/>
</dbReference>
<comment type="function">
    <text evidence="1">Cell division protein that is part of the divisome complex and is recruited early to the Z-ring. Probably stimulates Z-ring formation, perhaps through the cross-linking of FtsZ protofilaments. Its function overlaps with FtsA.</text>
</comment>
<comment type="subunit">
    <text evidence="1">Homodimer. Interacts with FtsZ.</text>
</comment>
<comment type="subcellular location">
    <subcellularLocation>
        <location evidence="1">Cytoplasm</location>
    </subcellularLocation>
    <text evidence="1">Localizes to the division site, in a FtsZ-dependent manner.</text>
</comment>
<comment type="similarity">
    <text evidence="1">Belongs to the SepF family.</text>
</comment>
<organism>
    <name type="scientific">Mycolicibacterium vanbaalenii (strain DSM 7251 / JCM 13017 / BCRC 16820 / KCTC 9966 / NRRL B-24157 / PYR-1)</name>
    <name type="common">Mycobacterium vanbaalenii</name>
    <dbReference type="NCBI Taxonomy" id="350058"/>
    <lineage>
        <taxon>Bacteria</taxon>
        <taxon>Bacillati</taxon>
        <taxon>Actinomycetota</taxon>
        <taxon>Actinomycetes</taxon>
        <taxon>Mycobacteriales</taxon>
        <taxon>Mycobacteriaceae</taxon>
        <taxon>Mycolicibacterium</taxon>
    </lineage>
</organism>
<reference key="1">
    <citation type="submission" date="2006-12" db="EMBL/GenBank/DDBJ databases">
        <title>Complete sequence of Mycobacterium vanbaalenii PYR-1.</title>
        <authorList>
            <consortium name="US DOE Joint Genome Institute"/>
            <person name="Copeland A."/>
            <person name="Lucas S."/>
            <person name="Lapidus A."/>
            <person name="Barry K."/>
            <person name="Detter J.C."/>
            <person name="Glavina del Rio T."/>
            <person name="Hammon N."/>
            <person name="Israni S."/>
            <person name="Dalin E."/>
            <person name="Tice H."/>
            <person name="Pitluck S."/>
            <person name="Singan V."/>
            <person name="Schmutz J."/>
            <person name="Larimer F."/>
            <person name="Land M."/>
            <person name="Hauser L."/>
            <person name="Kyrpides N."/>
            <person name="Anderson I.J."/>
            <person name="Miller C."/>
            <person name="Richardson P."/>
        </authorList>
    </citation>
    <scope>NUCLEOTIDE SEQUENCE [LARGE SCALE GENOMIC DNA]</scope>
    <source>
        <strain>DSM 7251 / JCM 13017 / BCRC 16820 / KCTC 9966 / NRRL B-24157 / PYR-1</strain>
    </source>
</reference>
<feature type="chain" id="PRO_0000334050" description="Cell division protein SepF">
    <location>
        <begin position="1"/>
        <end position="210"/>
    </location>
</feature>
<feature type="region of interest" description="Disordered" evidence="2">
    <location>
        <begin position="22"/>
        <end position="72"/>
    </location>
</feature>
<feature type="region of interest" description="Disordered" evidence="2">
    <location>
        <begin position="79"/>
        <end position="98"/>
    </location>
</feature>
<feature type="compositionally biased region" description="Basic and acidic residues" evidence="2">
    <location>
        <begin position="37"/>
        <end position="60"/>
    </location>
</feature>
<feature type="compositionally biased region" description="Basic and acidic residues" evidence="2">
    <location>
        <begin position="79"/>
        <end position="88"/>
    </location>
</feature>
<proteinExistence type="inferred from homology"/>
<name>SEPF_MYCVP</name>
<protein>
    <recommendedName>
        <fullName evidence="1">Cell division protein SepF</fullName>
    </recommendedName>
</protein>
<gene>
    <name evidence="1" type="primary">sepF</name>
    <name type="ordered locus">Mvan_3517</name>
</gene>
<sequence>MSTLHKVKAYFGMAPMDDYEDDYYEDDDRVPARGYRRPREDRFEDEAYPRGYDDRAREYDEPAGYRGGFDDARFEPRLRGPREFDRTPPRFGGLRGSTRGALAMDPRGMAELFEAGSPLAKITTLRPKDYSEARTIGERFRDGTPVIMDLVSMDNADAKRLVDFAAGLAFALRGSFDKVATKVFLLSPADVDVTAEQRRRIAEAGFYSYQ</sequence>
<accession>A1TAW2</accession>
<evidence type="ECO:0000255" key="1">
    <source>
        <dbReference type="HAMAP-Rule" id="MF_01197"/>
    </source>
</evidence>
<evidence type="ECO:0000256" key="2">
    <source>
        <dbReference type="SAM" id="MobiDB-lite"/>
    </source>
</evidence>
<keyword id="KW-0131">Cell cycle</keyword>
<keyword id="KW-0132">Cell division</keyword>
<keyword id="KW-0963">Cytoplasm</keyword>
<keyword id="KW-0717">Septation</keyword>